<sequence length="494" mass="54848">MNLLDPFMKMTEEQDKCISDAPSPTMSDDSAGSPCPSGSGSDTENTRPQENTFPKGDPDLKKESDEDKFPVCIREAVSQVLKGYDWTLVPMPVRVNGSSKNKPHVKRPMNAFMVWAQAARRKLADQYPHLHNAELSKTLGKLWRLLNESEKRPFVEEAERLRVQHKKDHPDYKYQPRRRKSVKNGQSEQEEGSEQTHISPNAIFKALQADSPQSSSSISEVHSPGEHSGQSQGPPTPPTTPKTDAQQPGKQDLKREGRPLAEGGRQPPHIDFRDVDIGELSSDVISNIETFDVNEFDQYLPPNGHPGVPATHGQVTTYSGTYGISSSASSPAGAGHAWMAKQQPQPPQPPAQPPAQHTLPALSGEQGPAQQRPHIKTEQLSPSHYSEQQQHSPQQQQQQQQQLGYGSFNLQHYGSSYPPITRSQYDYTEHQNSGSYYSHAAGQSGGLYSTFTYMNPTQRPMYTPIADTSGVPSIPQTHSPQHWEQPVYTQLTRP</sequence>
<dbReference type="EMBL" id="U12533">
    <property type="protein sequence ID" value="AAB09663.1"/>
    <property type="status" value="ALT_FRAME"/>
    <property type="molecule type" value="mRNA"/>
</dbReference>
<dbReference type="EMBL" id="AB012236">
    <property type="protein sequence ID" value="BAA25296.1"/>
    <property type="molecule type" value="mRNA"/>
</dbReference>
<dbReference type="EMBL" id="AADN03007462">
    <property type="status" value="NOT_ANNOTATED_CDS"/>
    <property type="molecule type" value="Genomic_DNA"/>
</dbReference>
<dbReference type="RefSeq" id="NP_989612.1">
    <property type="nucleotide sequence ID" value="NM_204281.2"/>
</dbReference>
<dbReference type="SMR" id="P48434"/>
<dbReference type="FunCoup" id="P48434">
    <property type="interactions" value="8"/>
</dbReference>
<dbReference type="STRING" id="9031.ENSGALP00000037718"/>
<dbReference type="GlyGen" id="P48434">
    <property type="glycosylation" value="1 site"/>
</dbReference>
<dbReference type="iPTMnet" id="P48434"/>
<dbReference type="PaxDb" id="9031-ENSGALP00000037718"/>
<dbReference type="Ensembl" id="ENSGALT00010072028.1">
    <property type="protein sequence ID" value="ENSGALP00010044718.1"/>
    <property type="gene ID" value="ENSGALG00010029771.1"/>
</dbReference>
<dbReference type="GeneID" id="374148"/>
<dbReference type="KEGG" id="gga:374148"/>
<dbReference type="CTD" id="6662"/>
<dbReference type="VEuPathDB" id="HostDB:geneid_374148"/>
<dbReference type="eggNOG" id="KOG0527">
    <property type="taxonomic scope" value="Eukaryota"/>
</dbReference>
<dbReference type="GeneTree" id="ENSGT00940000158269"/>
<dbReference type="HOGENOM" id="CLU_031800_0_0_1"/>
<dbReference type="InParanoid" id="P48434"/>
<dbReference type="OMA" id="QSSNSYY"/>
<dbReference type="OrthoDB" id="6247875at2759"/>
<dbReference type="PhylomeDB" id="P48434"/>
<dbReference type="Reactome" id="R-GGA-3769402">
    <property type="pathway name" value="Deactivation of the beta-catenin transactivating complex"/>
</dbReference>
<dbReference type="Reactome" id="R-GGA-8878166">
    <property type="pathway name" value="Transcriptional regulation by RUNX2"/>
</dbReference>
<dbReference type="PRO" id="PR:P48434"/>
<dbReference type="Proteomes" id="UP000000539">
    <property type="component" value="Chromosome 18"/>
</dbReference>
<dbReference type="Bgee" id="ENSGALG00000004386">
    <property type="expression patterns" value="Expressed in cerebellum and 10 other cell types or tissues"/>
</dbReference>
<dbReference type="GO" id="GO:0005654">
    <property type="term" value="C:nucleoplasm"/>
    <property type="evidence" value="ECO:0007669"/>
    <property type="project" value="Ensembl"/>
</dbReference>
<dbReference type="GO" id="GO:0005634">
    <property type="term" value="C:nucleus"/>
    <property type="evidence" value="ECO:0000314"/>
    <property type="project" value="AgBase"/>
</dbReference>
<dbReference type="GO" id="GO:0005667">
    <property type="term" value="C:transcription regulator complex"/>
    <property type="evidence" value="ECO:0007669"/>
    <property type="project" value="Ensembl"/>
</dbReference>
<dbReference type="GO" id="GO:0008013">
    <property type="term" value="F:beta-catenin binding"/>
    <property type="evidence" value="ECO:0007669"/>
    <property type="project" value="Ensembl"/>
</dbReference>
<dbReference type="GO" id="GO:0003682">
    <property type="term" value="F:chromatin binding"/>
    <property type="evidence" value="ECO:0007669"/>
    <property type="project" value="Ensembl"/>
</dbReference>
<dbReference type="GO" id="GO:0000987">
    <property type="term" value="F:cis-regulatory region sequence-specific DNA binding"/>
    <property type="evidence" value="ECO:0000314"/>
    <property type="project" value="UniProtKB"/>
</dbReference>
<dbReference type="GO" id="GO:0001228">
    <property type="term" value="F:DNA-binding transcription activator activity, RNA polymerase II-specific"/>
    <property type="evidence" value="ECO:0007669"/>
    <property type="project" value="Ensembl"/>
</dbReference>
<dbReference type="GO" id="GO:0000981">
    <property type="term" value="F:DNA-binding transcription factor activity, RNA polymerase II-specific"/>
    <property type="evidence" value="ECO:0000318"/>
    <property type="project" value="GO_Central"/>
</dbReference>
<dbReference type="GO" id="GO:0097157">
    <property type="term" value="F:pre-mRNA intronic binding"/>
    <property type="evidence" value="ECO:0007669"/>
    <property type="project" value="Ensembl"/>
</dbReference>
<dbReference type="GO" id="GO:0034236">
    <property type="term" value="F:protein kinase A catalytic subunit binding"/>
    <property type="evidence" value="ECO:0007669"/>
    <property type="project" value="Ensembl"/>
</dbReference>
<dbReference type="GO" id="GO:0000978">
    <property type="term" value="F:RNA polymerase II cis-regulatory region sequence-specific DNA binding"/>
    <property type="evidence" value="ECO:0000318"/>
    <property type="project" value="GO_Central"/>
</dbReference>
<dbReference type="GO" id="GO:0044390">
    <property type="term" value="F:ubiquitin-like protein conjugating enzyme binding"/>
    <property type="evidence" value="ECO:0000353"/>
    <property type="project" value="AgBase"/>
</dbReference>
<dbReference type="GO" id="GO:0097065">
    <property type="term" value="P:anterior head development"/>
    <property type="evidence" value="ECO:0007669"/>
    <property type="project" value="Ensembl"/>
</dbReference>
<dbReference type="GO" id="GO:0003180">
    <property type="term" value="P:aortic valve morphogenesis"/>
    <property type="evidence" value="ECO:0007669"/>
    <property type="project" value="Ensembl"/>
</dbReference>
<dbReference type="GO" id="GO:0060018">
    <property type="term" value="P:astrocyte fate commitment"/>
    <property type="evidence" value="ECO:0007669"/>
    <property type="project" value="Ensembl"/>
</dbReference>
<dbReference type="GO" id="GO:0030282">
    <property type="term" value="P:bone mineralization"/>
    <property type="evidence" value="ECO:0007669"/>
    <property type="project" value="Ensembl"/>
</dbReference>
<dbReference type="GO" id="GO:0001658">
    <property type="term" value="P:branching involved in ureteric bud morphogenesis"/>
    <property type="evidence" value="ECO:0000270"/>
    <property type="project" value="UniProtKB"/>
</dbReference>
<dbReference type="GO" id="GO:0060532">
    <property type="term" value="P:bronchus cartilage development"/>
    <property type="evidence" value="ECO:0007669"/>
    <property type="project" value="Ensembl"/>
</dbReference>
<dbReference type="GO" id="GO:0060070">
    <property type="term" value="P:canonical Wnt signaling pathway"/>
    <property type="evidence" value="ECO:0007669"/>
    <property type="project" value="Ensembl"/>
</dbReference>
<dbReference type="GO" id="GO:0001502">
    <property type="term" value="P:cartilage condensation"/>
    <property type="evidence" value="ECO:0000314"/>
    <property type="project" value="UniProtKB"/>
</dbReference>
<dbReference type="GO" id="GO:0061323">
    <property type="term" value="P:cell proliferation involved in heart morphogenesis"/>
    <property type="evidence" value="ECO:0007669"/>
    <property type="project" value="Ensembl"/>
</dbReference>
<dbReference type="GO" id="GO:0098609">
    <property type="term" value="P:cell-cell adhesion"/>
    <property type="evidence" value="ECO:0007669"/>
    <property type="project" value="Ensembl"/>
</dbReference>
<dbReference type="GO" id="GO:0071773">
    <property type="term" value="P:cellular response to BMP stimulus"/>
    <property type="evidence" value="ECO:0000314"/>
    <property type="project" value="UniProtKB"/>
</dbReference>
<dbReference type="GO" id="GO:0071364">
    <property type="term" value="P:cellular response to epidermal growth factor stimulus"/>
    <property type="evidence" value="ECO:0007669"/>
    <property type="project" value="Ensembl"/>
</dbReference>
<dbReference type="GO" id="GO:0071504">
    <property type="term" value="P:cellular response to heparin"/>
    <property type="evidence" value="ECO:0007669"/>
    <property type="project" value="Ensembl"/>
</dbReference>
<dbReference type="GO" id="GO:0071347">
    <property type="term" value="P:cellular response to interleukin-1"/>
    <property type="evidence" value="ECO:0007669"/>
    <property type="project" value="Ensembl"/>
</dbReference>
<dbReference type="GO" id="GO:0071260">
    <property type="term" value="P:cellular response to mechanical stimulus"/>
    <property type="evidence" value="ECO:0007669"/>
    <property type="project" value="Ensembl"/>
</dbReference>
<dbReference type="GO" id="GO:0071300">
    <property type="term" value="P:cellular response to retinoic acid"/>
    <property type="evidence" value="ECO:0000270"/>
    <property type="project" value="UniProtKB"/>
</dbReference>
<dbReference type="GO" id="GO:0071560">
    <property type="term" value="P:cellular response to transforming growth factor beta stimulus"/>
    <property type="evidence" value="ECO:0007669"/>
    <property type="project" value="Ensembl"/>
</dbReference>
<dbReference type="GO" id="GO:0002062">
    <property type="term" value="P:chondrocyte differentiation"/>
    <property type="evidence" value="ECO:0000314"/>
    <property type="project" value="UniProtKB"/>
</dbReference>
<dbReference type="GO" id="GO:0090103">
    <property type="term" value="P:cochlea morphogenesis"/>
    <property type="evidence" value="ECO:0007669"/>
    <property type="project" value="Ensembl"/>
</dbReference>
<dbReference type="GO" id="GO:0007010">
    <property type="term" value="P:cytoskeleton organization"/>
    <property type="evidence" value="ECO:0007669"/>
    <property type="project" value="Ensembl"/>
</dbReference>
<dbReference type="GO" id="GO:0006351">
    <property type="term" value="P:DNA-templated transcription"/>
    <property type="evidence" value="ECO:0000314"/>
    <property type="project" value="UniProtKB"/>
</dbReference>
<dbReference type="GO" id="GO:0048566">
    <property type="term" value="P:embryonic digestive tract development"/>
    <property type="evidence" value="ECO:0000315"/>
    <property type="project" value="AgBase"/>
</dbReference>
<dbReference type="GO" id="GO:0003203">
    <property type="term" value="P:endocardial cushion morphogenesis"/>
    <property type="evidence" value="ECO:0007669"/>
    <property type="project" value="Ensembl"/>
</dbReference>
<dbReference type="GO" id="GO:0031018">
    <property type="term" value="P:endocrine pancreas development"/>
    <property type="evidence" value="ECO:0007669"/>
    <property type="project" value="Ensembl"/>
</dbReference>
<dbReference type="GO" id="GO:0007173">
    <property type="term" value="P:epidermal growth factor receptor signaling pathway"/>
    <property type="evidence" value="ECO:0007669"/>
    <property type="project" value="Ensembl"/>
</dbReference>
<dbReference type="GO" id="GO:0050673">
    <property type="term" value="P:epithelial cell proliferation"/>
    <property type="evidence" value="ECO:0007669"/>
    <property type="project" value="Ensembl"/>
</dbReference>
<dbReference type="GO" id="GO:0060441">
    <property type="term" value="P:epithelial tube branching involved in lung morphogenesis"/>
    <property type="evidence" value="ECO:0007669"/>
    <property type="project" value="Ensembl"/>
</dbReference>
<dbReference type="GO" id="GO:0070371">
    <property type="term" value="P:ERK1 and ERK2 cascade"/>
    <property type="evidence" value="ECO:0007669"/>
    <property type="project" value="Ensembl"/>
</dbReference>
<dbReference type="GO" id="GO:0085029">
    <property type="term" value="P:extracellular matrix assembly"/>
    <property type="evidence" value="ECO:0007669"/>
    <property type="project" value="Ensembl"/>
</dbReference>
<dbReference type="GO" id="GO:0002067">
    <property type="term" value="P:glandular epithelial cell differentiation"/>
    <property type="evidence" value="ECO:0007669"/>
    <property type="project" value="Ensembl"/>
</dbReference>
<dbReference type="GO" id="GO:0021780">
    <property type="term" value="P:glial cell fate specification"/>
    <property type="evidence" value="ECO:0007669"/>
    <property type="project" value="Ensembl"/>
</dbReference>
<dbReference type="GO" id="GO:0003430">
    <property type="term" value="P:growth plate cartilage chondrocyte growth"/>
    <property type="evidence" value="ECO:0000250"/>
    <property type="project" value="UniProtKB"/>
</dbReference>
<dbReference type="GO" id="GO:0070384">
    <property type="term" value="P:Harderian gland development"/>
    <property type="evidence" value="ECO:0007669"/>
    <property type="project" value="Ensembl"/>
</dbReference>
<dbReference type="GO" id="GO:0007507">
    <property type="term" value="P:heart development"/>
    <property type="evidence" value="ECO:0000318"/>
    <property type="project" value="GO_Central"/>
</dbReference>
<dbReference type="GO" id="GO:0003170">
    <property type="term" value="P:heart valve development"/>
    <property type="evidence" value="ECO:0000270"/>
    <property type="project" value="UniProtKB"/>
</dbReference>
<dbReference type="GO" id="GO:0003188">
    <property type="term" value="P:heart valve formation"/>
    <property type="evidence" value="ECO:0007669"/>
    <property type="project" value="Ensembl"/>
</dbReference>
<dbReference type="GO" id="GO:0048873">
    <property type="term" value="P:homeostasis of number of cells within a tissue"/>
    <property type="evidence" value="ECO:0000315"/>
    <property type="project" value="AgBase"/>
</dbReference>
<dbReference type="GO" id="GO:0060575">
    <property type="term" value="P:intestinal epithelial cell differentiation"/>
    <property type="evidence" value="ECO:0007669"/>
    <property type="project" value="Ensembl"/>
</dbReference>
<dbReference type="GO" id="GO:0060729">
    <property type="term" value="P:intestinal epithelial structure maintenance"/>
    <property type="evidence" value="ECO:0007669"/>
    <property type="project" value="Ensembl"/>
</dbReference>
<dbReference type="GO" id="GO:0035622">
    <property type="term" value="P:intrahepatic bile duct development"/>
    <property type="evidence" value="ECO:0007669"/>
    <property type="project" value="Ensembl"/>
</dbReference>
<dbReference type="GO" id="GO:0032808">
    <property type="term" value="P:lacrimal gland development"/>
    <property type="evidence" value="ECO:0007669"/>
    <property type="project" value="Ensembl"/>
</dbReference>
<dbReference type="GO" id="GO:0060174">
    <property type="term" value="P:limb bud formation"/>
    <property type="evidence" value="ECO:0007669"/>
    <property type="project" value="Ensembl"/>
</dbReference>
<dbReference type="GO" id="GO:0060487">
    <property type="term" value="P:lung epithelial cell differentiation"/>
    <property type="evidence" value="ECO:0007669"/>
    <property type="project" value="Ensembl"/>
</dbReference>
<dbReference type="GO" id="GO:0061145">
    <property type="term" value="P:lung smooth muscle development"/>
    <property type="evidence" value="ECO:0007669"/>
    <property type="project" value="Ensembl"/>
</dbReference>
<dbReference type="GO" id="GO:0019100">
    <property type="term" value="P:male germ-line sex determination"/>
    <property type="evidence" value="ECO:0007669"/>
    <property type="project" value="Ensembl"/>
</dbReference>
<dbReference type="GO" id="GO:0008584">
    <property type="term" value="P:male gonad development"/>
    <property type="evidence" value="ECO:0000270"/>
    <property type="project" value="UniProtKB"/>
</dbReference>
<dbReference type="GO" id="GO:0097152">
    <property type="term" value="P:mesenchymal cell apoptotic process"/>
    <property type="evidence" value="ECO:0007669"/>
    <property type="project" value="Ensembl"/>
</dbReference>
<dbReference type="GO" id="GO:0010463">
    <property type="term" value="P:mesenchymal cell proliferation"/>
    <property type="evidence" value="ECO:0007669"/>
    <property type="project" value="Ensembl"/>
</dbReference>
<dbReference type="GO" id="GO:0072289">
    <property type="term" value="P:metanephric nephron tubule formation"/>
    <property type="evidence" value="ECO:0007669"/>
    <property type="project" value="Ensembl"/>
</dbReference>
<dbReference type="GO" id="GO:0002009">
    <property type="term" value="P:morphogenesis of an epithelium"/>
    <property type="evidence" value="ECO:0000315"/>
    <property type="project" value="AgBase"/>
</dbReference>
<dbReference type="GO" id="GO:1904864">
    <property type="term" value="P:negative regulation of beta-catenin-TCF complex assembly"/>
    <property type="evidence" value="ECO:0007669"/>
    <property type="project" value="Ensembl"/>
</dbReference>
<dbReference type="GO" id="GO:1903011">
    <property type="term" value="P:negative regulation of bone development"/>
    <property type="evidence" value="ECO:0000315"/>
    <property type="project" value="AgBase"/>
</dbReference>
<dbReference type="GO" id="GO:0030502">
    <property type="term" value="P:negative regulation of bone mineralization"/>
    <property type="evidence" value="ECO:0007669"/>
    <property type="project" value="Ensembl"/>
</dbReference>
<dbReference type="GO" id="GO:0090090">
    <property type="term" value="P:negative regulation of canonical Wnt signaling pathway"/>
    <property type="evidence" value="ECO:0000250"/>
    <property type="project" value="UniProtKB"/>
</dbReference>
<dbReference type="GO" id="GO:0032331">
    <property type="term" value="P:negative regulation of chondrocyte differentiation"/>
    <property type="evidence" value="ECO:0007669"/>
    <property type="project" value="Ensembl"/>
</dbReference>
<dbReference type="GO" id="GO:0030857">
    <property type="term" value="P:negative regulation of epithelial cell differentiation"/>
    <property type="evidence" value="ECO:0007669"/>
    <property type="project" value="Ensembl"/>
</dbReference>
<dbReference type="GO" id="GO:0050680">
    <property type="term" value="P:negative regulation of epithelial cell proliferation"/>
    <property type="evidence" value="ECO:0007669"/>
    <property type="project" value="Ensembl"/>
</dbReference>
<dbReference type="GO" id="GO:0046322">
    <property type="term" value="P:negative regulation of fatty acid oxidation"/>
    <property type="evidence" value="ECO:0000250"/>
    <property type="project" value="UniProtKB"/>
</dbReference>
<dbReference type="GO" id="GO:0010629">
    <property type="term" value="P:negative regulation of gene expression"/>
    <property type="evidence" value="ECO:0007669"/>
    <property type="project" value="Ensembl"/>
</dbReference>
<dbReference type="GO" id="GO:0002683">
    <property type="term" value="P:negative regulation of immune system process"/>
    <property type="evidence" value="ECO:0007669"/>
    <property type="project" value="Ensembl"/>
</dbReference>
<dbReference type="GO" id="GO:2001054">
    <property type="term" value="P:negative regulation of mesenchymal cell apoptotic process"/>
    <property type="evidence" value="ECO:0007669"/>
    <property type="project" value="Ensembl"/>
</dbReference>
<dbReference type="GO" id="GO:1902894">
    <property type="term" value="P:negative regulation of miRNA transcription"/>
    <property type="evidence" value="ECO:0007669"/>
    <property type="project" value="Ensembl"/>
</dbReference>
<dbReference type="GO" id="GO:0045662">
    <property type="term" value="P:negative regulation of myoblast differentiation"/>
    <property type="evidence" value="ECO:0007669"/>
    <property type="project" value="Ensembl"/>
</dbReference>
<dbReference type="GO" id="GO:0045668">
    <property type="term" value="P:negative regulation of osteoblast differentiation"/>
    <property type="evidence" value="ECO:0000250"/>
    <property type="project" value="UniProtKB"/>
</dbReference>
<dbReference type="GO" id="GO:0046533">
    <property type="term" value="P:negative regulation of photoreceptor cell differentiation"/>
    <property type="evidence" value="ECO:0007669"/>
    <property type="project" value="Ensembl"/>
</dbReference>
<dbReference type="GO" id="GO:0000122">
    <property type="term" value="P:negative regulation of transcription by RNA polymerase II"/>
    <property type="evidence" value="ECO:0000318"/>
    <property type="project" value="GO_Central"/>
</dbReference>
<dbReference type="GO" id="GO:0036032">
    <property type="term" value="P:neural crest cell delamination"/>
    <property type="evidence" value="ECO:0000315"/>
    <property type="project" value="UniProtKB"/>
</dbReference>
<dbReference type="GO" id="GO:0014036">
    <property type="term" value="P:neural crest cell fate specification"/>
    <property type="evidence" value="ECO:0000314"/>
    <property type="project" value="UniProtKB"/>
</dbReference>
<dbReference type="GO" id="GO:0001755">
    <property type="term" value="P:neural crest cell migration"/>
    <property type="evidence" value="ECO:0000315"/>
    <property type="project" value="AgBase"/>
</dbReference>
<dbReference type="GO" id="GO:0048665">
    <property type="term" value="P:neuron fate specification"/>
    <property type="evidence" value="ECO:0007669"/>
    <property type="project" value="Ensembl"/>
</dbReference>
<dbReference type="GO" id="GO:0007219">
    <property type="term" value="P:Notch signaling pathway"/>
    <property type="evidence" value="ECO:0007669"/>
    <property type="project" value="Ensembl"/>
</dbReference>
<dbReference type="GO" id="GO:0030903">
    <property type="term" value="P:notochord development"/>
    <property type="evidence" value="ECO:0007669"/>
    <property type="project" value="Ensembl"/>
</dbReference>
<dbReference type="GO" id="GO:0006334">
    <property type="term" value="P:nucleosome assembly"/>
    <property type="evidence" value="ECO:0007669"/>
    <property type="project" value="Ensembl"/>
</dbReference>
<dbReference type="GO" id="GO:0048709">
    <property type="term" value="P:oligodendrocyte differentiation"/>
    <property type="evidence" value="ECO:0000318"/>
    <property type="project" value="GO_Central"/>
</dbReference>
<dbReference type="GO" id="GO:0030916">
    <property type="term" value="P:otic vesicle formation"/>
    <property type="evidence" value="ECO:0007669"/>
    <property type="project" value="Ensembl"/>
</dbReference>
<dbReference type="GO" id="GO:0090190">
    <property type="term" value="P:positive regulation of branching involved in ureteric bud morphogenesis"/>
    <property type="evidence" value="ECO:0007669"/>
    <property type="project" value="Ensembl"/>
</dbReference>
<dbReference type="GO" id="GO:1902027">
    <property type="term" value="P:positive regulation of cartilage condensation"/>
    <property type="evidence" value="ECO:0000315"/>
    <property type="project" value="AgBase"/>
</dbReference>
<dbReference type="GO" id="GO:2000138">
    <property type="term" value="P:positive regulation of cell proliferation involved in heart morphogenesis"/>
    <property type="evidence" value="ECO:0007669"/>
    <property type="project" value="Ensembl"/>
</dbReference>
<dbReference type="GO" id="GO:0032332">
    <property type="term" value="P:positive regulation of chondrocyte differentiation"/>
    <property type="evidence" value="ECO:0000318"/>
    <property type="project" value="GO_Central"/>
</dbReference>
<dbReference type="GO" id="GO:1902732">
    <property type="term" value="P:positive regulation of chondrocyte proliferation"/>
    <property type="evidence" value="ECO:0007669"/>
    <property type="project" value="Ensembl"/>
</dbReference>
<dbReference type="GO" id="GO:0032967">
    <property type="term" value="P:positive regulation of collagen biosynthetic process"/>
    <property type="evidence" value="ECO:0000315"/>
    <property type="project" value="AgBase"/>
</dbReference>
<dbReference type="GO" id="GO:0030858">
    <property type="term" value="P:positive regulation of epithelial cell differentiation"/>
    <property type="evidence" value="ECO:0007669"/>
    <property type="project" value="Ensembl"/>
</dbReference>
<dbReference type="GO" id="GO:0010634">
    <property type="term" value="P:positive regulation of epithelial cell migration"/>
    <property type="evidence" value="ECO:0007669"/>
    <property type="project" value="Ensembl"/>
</dbReference>
<dbReference type="GO" id="GO:0050679">
    <property type="term" value="P:positive regulation of epithelial cell proliferation"/>
    <property type="evidence" value="ECO:0007669"/>
    <property type="project" value="Ensembl"/>
</dbReference>
<dbReference type="GO" id="GO:1901203">
    <property type="term" value="P:positive regulation of extracellular matrix assembly"/>
    <property type="evidence" value="ECO:0007669"/>
    <property type="project" value="Ensembl"/>
</dbReference>
<dbReference type="GO" id="GO:0010628">
    <property type="term" value="P:positive regulation of gene expression"/>
    <property type="evidence" value="ECO:0007669"/>
    <property type="project" value="Ensembl"/>
</dbReference>
<dbReference type="GO" id="GO:2000020">
    <property type="term" value="P:positive regulation of male gonad development"/>
    <property type="evidence" value="ECO:0007669"/>
    <property type="project" value="Ensembl"/>
</dbReference>
<dbReference type="GO" id="GO:0002053">
    <property type="term" value="P:positive regulation of mesenchymal cell proliferation"/>
    <property type="evidence" value="ECO:0007669"/>
    <property type="project" value="Ensembl"/>
</dbReference>
<dbReference type="GO" id="GO:2000741">
    <property type="term" value="P:positive regulation of mesenchymal stem cell differentiation"/>
    <property type="evidence" value="ECO:0007669"/>
    <property type="project" value="Ensembl"/>
</dbReference>
<dbReference type="GO" id="GO:0090300">
    <property type="term" value="P:positive regulation of neural crest formation"/>
    <property type="evidence" value="ECO:0000315"/>
    <property type="project" value="AgBase"/>
</dbReference>
<dbReference type="GO" id="GO:0045732">
    <property type="term" value="P:positive regulation of protein catabolic process"/>
    <property type="evidence" value="ECO:0007669"/>
    <property type="project" value="Ensembl"/>
</dbReference>
<dbReference type="GO" id="GO:2000648">
    <property type="term" value="P:positive regulation of stem cell proliferation"/>
    <property type="evidence" value="ECO:0007669"/>
    <property type="project" value="Ensembl"/>
</dbReference>
<dbReference type="GO" id="GO:0034504">
    <property type="term" value="P:protein localization to nucleus"/>
    <property type="evidence" value="ECO:0007669"/>
    <property type="project" value="Ensembl"/>
</dbReference>
<dbReference type="GO" id="GO:0061046">
    <property type="term" value="P:regulation of branching involved in lung morphogenesis"/>
    <property type="evidence" value="ECO:0007669"/>
    <property type="project" value="Ensembl"/>
</dbReference>
<dbReference type="GO" id="GO:0061035">
    <property type="term" value="P:regulation of cartilage development"/>
    <property type="evidence" value="ECO:0000314"/>
    <property type="project" value="UniProtKB"/>
</dbReference>
<dbReference type="GO" id="GO:0010564">
    <property type="term" value="P:regulation of cell cycle process"/>
    <property type="evidence" value="ECO:0007669"/>
    <property type="project" value="Ensembl"/>
</dbReference>
<dbReference type="GO" id="GO:0060784">
    <property type="term" value="P:regulation of cell proliferation involved in tissue homeostasis"/>
    <property type="evidence" value="ECO:0007669"/>
    <property type="project" value="Ensembl"/>
</dbReference>
<dbReference type="GO" id="GO:2000794">
    <property type="term" value="P:regulation of epithelial cell proliferation involved in lung morphogenesis"/>
    <property type="evidence" value="ECO:0007669"/>
    <property type="project" value="Ensembl"/>
</dbReference>
<dbReference type="GO" id="GO:0072034">
    <property type="term" value="P:renal vesicle induction"/>
    <property type="evidence" value="ECO:0007669"/>
    <property type="project" value="Ensembl"/>
</dbReference>
<dbReference type="GO" id="GO:0070542">
    <property type="term" value="P:response to fatty acid"/>
    <property type="evidence" value="ECO:0000250"/>
    <property type="project" value="UniProtKB"/>
</dbReference>
<dbReference type="GO" id="GO:0060221">
    <property type="term" value="P:retinal rod cell differentiation"/>
    <property type="evidence" value="ECO:0007669"/>
    <property type="project" value="Ensembl"/>
</dbReference>
<dbReference type="GO" id="GO:0060009">
    <property type="term" value="P:Sertoli cell development"/>
    <property type="evidence" value="ECO:0007669"/>
    <property type="project" value="Ensembl"/>
</dbReference>
<dbReference type="GO" id="GO:0035019">
    <property type="term" value="P:somatic stem cell population maintenance"/>
    <property type="evidence" value="ECO:0007669"/>
    <property type="project" value="Ensembl"/>
</dbReference>
<dbReference type="GO" id="GO:0007283">
    <property type="term" value="P:spermatogenesis"/>
    <property type="evidence" value="ECO:0007669"/>
    <property type="project" value="Ensembl"/>
</dbReference>
<dbReference type="GO" id="GO:0072089">
    <property type="term" value="P:stem cell proliferation"/>
    <property type="evidence" value="ECO:0007669"/>
    <property type="project" value="Ensembl"/>
</dbReference>
<dbReference type="GO" id="GO:0060534">
    <property type="term" value="P:trachea cartilage development"/>
    <property type="evidence" value="ECO:0007669"/>
    <property type="project" value="Ensembl"/>
</dbReference>
<dbReference type="GO" id="GO:0006366">
    <property type="term" value="P:transcription by RNA polymerase II"/>
    <property type="evidence" value="ECO:0007669"/>
    <property type="project" value="Ensembl"/>
</dbReference>
<dbReference type="GO" id="GO:0060290">
    <property type="term" value="P:transdifferentiation"/>
    <property type="evidence" value="ECO:0000315"/>
    <property type="project" value="AgBase"/>
</dbReference>
<dbReference type="GO" id="GO:0072197">
    <property type="term" value="P:ureter morphogenesis"/>
    <property type="evidence" value="ECO:0007669"/>
    <property type="project" value="Ensembl"/>
</dbReference>
<dbReference type="GO" id="GO:0072193">
    <property type="term" value="P:ureter smooth muscle cell differentiation"/>
    <property type="evidence" value="ECO:0007669"/>
    <property type="project" value="Ensembl"/>
</dbReference>
<dbReference type="GO" id="GO:0072190">
    <property type="term" value="P:ureter urothelium development"/>
    <property type="evidence" value="ECO:0007669"/>
    <property type="project" value="Ensembl"/>
</dbReference>
<dbReference type="CDD" id="cd22031">
    <property type="entry name" value="HMG-box_SoxE"/>
    <property type="match status" value="1"/>
</dbReference>
<dbReference type="FunFam" id="1.10.30.10:FF:000004">
    <property type="entry name" value="Transcription factor SOX-10"/>
    <property type="match status" value="1"/>
</dbReference>
<dbReference type="Gene3D" id="1.10.30.10">
    <property type="entry name" value="High mobility group box domain"/>
    <property type="match status" value="1"/>
</dbReference>
<dbReference type="InterPro" id="IPR009071">
    <property type="entry name" value="HMG_box_dom"/>
</dbReference>
<dbReference type="InterPro" id="IPR036910">
    <property type="entry name" value="HMG_box_dom_sf"/>
</dbReference>
<dbReference type="InterPro" id="IPR022151">
    <property type="entry name" value="Sox_N"/>
</dbReference>
<dbReference type="InterPro" id="IPR050917">
    <property type="entry name" value="SOX_TF"/>
</dbReference>
<dbReference type="PANTHER" id="PTHR45803">
    <property type="entry name" value="SOX100B"/>
    <property type="match status" value="1"/>
</dbReference>
<dbReference type="PANTHER" id="PTHR45803:SF1">
    <property type="entry name" value="TRANSCRIPTION FACTOR SOX-9"/>
    <property type="match status" value="1"/>
</dbReference>
<dbReference type="Pfam" id="PF00505">
    <property type="entry name" value="HMG_box"/>
    <property type="match status" value="1"/>
</dbReference>
<dbReference type="Pfam" id="PF12444">
    <property type="entry name" value="Sox_N"/>
    <property type="match status" value="1"/>
</dbReference>
<dbReference type="SMART" id="SM00398">
    <property type="entry name" value="HMG"/>
    <property type="match status" value="1"/>
</dbReference>
<dbReference type="SUPFAM" id="SSF47095">
    <property type="entry name" value="HMG-box"/>
    <property type="match status" value="1"/>
</dbReference>
<dbReference type="PROSITE" id="PS50118">
    <property type="entry name" value="HMG_BOX_2"/>
    <property type="match status" value="1"/>
</dbReference>
<gene>
    <name evidence="8" type="primary">SOX9</name>
</gene>
<feature type="chain" id="PRO_0000048745" description="Transcription factor SOX-9">
    <location>
        <begin position="1"/>
        <end position="494"/>
    </location>
</feature>
<feature type="DNA-binding region" description="HMG box" evidence="3">
    <location>
        <begin position="105"/>
        <end position="173"/>
    </location>
</feature>
<feature type="region of interest" description="Disordered" evidence="4">
    <location>
        <begin position="1"/>
        <end position="66"/>
    </location>
</feature>
<feature type="region of interest" description="Dimerization (DIM)" evidence="1">
    <location>
        <begin position="63"/>
        <end position="103"/>
    </location>
</feature>
<feature type="region of interest" description="PQA" evidence="1">
    <location>
        <begin position="63"/>
        <end position="103"/>
    </location>
</feature>
<feature type="region of interest" description="Disordered" evidence="4">
    <location>
        <begin position="159"/>
        <end position="275"/>
    </location>
</feature>
<feature type="region of interest" description="Transactivation domain (TAM)" evidence="1">
    <location>
        <begin position="224"/>
        <end position="309"/>
    </location>
</feature>
<feature type="region of interest" description="Disordered" evidence="4">
    <location>
        <begin position="326"/>
        <end position="402"/>
    </location>
</feature>
<feature type="region of interest" description="Transactivation domain (TAC)" evidence="1">
    <location>
        <begin position="372"/>
        <end position="494"/>
    </location>
</feature>
<feature type="region of interest" description="Disordered" evidence="4">
    <location>
        <begin position="462"/>
        <end position="494"/>
    </location>
</feature>
<feature type="short sequence motif" description="9aaTAD 1" evidence="1">
    <location>
        <begin position="277"/>
        <end position="286"/>
    </location>
</feature>
<feature type="short sequence motif" description="9aaTAD 2" evidence="1">
    <location>
        <begin position="292"/>
        <end position="300"/>
    </location>
</feature>
<feature type="short sequence motif" description="9aaTAD 3" evidence="1">
    <location>
        <begin position="445"/>
        <end position="453"/>
    </location>
</feature>
<feature type="compositionally biased region" description="Low complexity" evidence="4">
    <location>
        <begin position="27"/>
        <end position="42"/>
    </location>
</feature>
<feature type="compositionally biased region" description="Basic and acidic residues" evidence="4">
    <location>
        <begin position="56"/>
        <end position="66"/>
    </location>
</feature>
<feature type="compositionally biased region" description="Basic and acidic residues" evidence="4">
    <location>
        <begin position="159"/>
        <end position="174"/>
    </location>
</feature>
<feature type="compositionally biased region" description="Low complexity" evidence="4">
    <location>
        <begin position="211"/>
        <end position="222"/>
    </location>
</feature>
<feature type="compositionally biased region" description="Low complexity" evidence="4">
    <location>
        <begin position="326"/>
        <end position="337"/>
    </location>
</feature>
<feature type="compositionally biased region" description="Pro residues" evidence="4">
    <location>
        <begin position="344"/>
        <end position="353"/>
    </location>
</feature>
<feature type="compositionally biased region" description="Polar residues" evidence="4">
    <location>
        <begin position="378"/>
        <end position="387"/>
    </location>
</feature>
<feature type="compositionally biased region" description="Low complexity" evidence="4">
    <location>
        <begin position="388"/>
        <end position="402"/>
    </location>
</feature>
<feature type="compositionally biased region" description="Polar residues" evidence="4">
    <location>
        <begin position="470"/>
        <end position="494"/>
    </location>
</feature>
<feature type="modified residue" description="Phosphoserine" evidence="6">
    <location>
        <position position="64"/>
    </location>
</feature>
<feature type="modified residue" description="Phosphoserine" evidence="6">
    <location>
        <position position="181"/>
    </location>
</feature>
<feature type="cross-link" description="Glycyl lysine isopeptide (Lys-Gly) (interchain with G-Cter in SUMO)">
    <location>
        <position position="376"/>
    </location>
</feature>
<feature type="mutagenesis site" description="Decreases cooperating with SNAI2 to trigger neural crest delamination; when associated with R-254 and R-376." evidence="6">
    <original>K</original>
    <variation>R</variation>
    <location>
        <position position="61"/>
    </location>
</feature>
<feature type="mutagenesis site" description="Abolishes sumoylation; when associated with A-181. Abolishes phosphorylation; when associated with A-181. Reduces ability to associate with UBE2I; when associated with A-181. Prevents trunk neural crest delamination; when associated with A-181. Prevents cooperating with SNAI2 to trigger neural crest delamination; when associated with A-181. Abolishes interaction with SNAI2; when associated with A-181." evidence="6">
    <original>S</original>
    <variation>A</variation>
    <location>
        <position position="64"/>
    </location>
</feature>
<feature type="mutagenesis site" description="Sumoylation; when associated with D-181. Initiates trunk neural crest delamination; when associated with D-181. Allows cooperating with SNAI2 to trigger neural crest delamination; when associated with D-181. Allows interaction with SNAI2; when associated with D-181." evidence="6">
    <original>S</original>
    <variation>D</variation>
    <location>
        <position position="64"/>
    </location>
</feature>
<feature type="mutagenesis site" description="Abolishes sumoylation; when associated with A-64. Abolishes phosphorylation; when associated with A-64. Reduces ability to associate with UBE2I; when associated with A-64. Prevents trunk neural crest delamination; when associated with A-64. Prevents cooperating with SNAI2 to trigger neural crest delamination; when associated with A-64. Abolishes interaction with SNAI2; when associated with A-64." evidence="6">
    <original>S</original>
    <variation>A</variation>
    <location>
        <position position="181"/>
    </location>
</feature>
<feature type="mutagenesis site" description="Sumoylation; when associated with D-64. Initiates trunk neural crest delamination; when associated with D-64. Allows cooperating with SNAI2 to trigger neural crest delamination; when associated with D-64. Allows interaction with SNAI2; when associated with D-64." evidence="6">
    <original>S</original>
    <variation>D</variation>
    <location>
        <position position="181"/>
    </location>
</feature>
<feature type="mutagenesis site" description="Decreases cooperating with SNAI2 to trigger neural crest delamination; when associated with R-61 and R-376." evidence="6">
    <original>K</original>
    <variation>R</variation>
    <location>
        <position position="254"/>
    </location>
</feature>
<feature type="mutagenesis site" description="Decreases cooperating with SNAI2 to trigger neural crest delamination; when associated with R-61 and R-254." evidence="6">
    <original>K</original>
    <variation>R</variation>
    <location>
        <position position="376"/>
    </location>
</feature>
<feature type="mutagenesis site" description="Not sumoylated." evidence="6">
    <original>K</original>
    <variation>R</variation>
    <location>
        <position position="376"/>
    </location>
</feature>
<feature type="sequence conflict" description="In Ref. 1; AAB09663." evidence="9" ref="1">
    <original>CISD</original>
    <variation>GLSG</variation>
    <location>
        <begin position="17"/>
        <end position="20"/>
    </location>
</feature>
<feature type="sequence conflict" description="In Ref. 1; AAB09663." evidence="9" ref="1">
    <original>S</original>
    <variation>T</variation>
    <location>
        <position position="181"/>
    </location>
</feature>
<feature type="sequence conflict" description="In Ref. 1; AAB09663." evidence="9" ref="1">
    <original>Y</original>
    <variation>N</variation>
    <location>
        <position position="385"/>
    </location>
</feature>
<feature type="sequence conflict" description="In Ref. 1; AAB09663." evidence="9" ref="1">
    <original>S</original>
    <variation>F</variation>
    <location>
        <position position="415"/>
    </location>
</feature>
<feature type="sequence conflict" description="In Ref. 1; AAB09663." evidence="9" ref="1">
    <original>Q</original>
    <variation>E</variation>
    <location>
        <position position="424"/>
    </location>
</feature>
<feature type="sequence conflict" description="In Ref. 1; AAB09663." evidence="9" ref="1">
    <original>G</original>
    <variation>S</variation>
    <location>
        <position position="446"/>
    </location>
</feature>
<feature type="sequence conflict" description="In Ref. 1; AAB09663." evidence="9" ref="1">
    <original>S</original>
    <variation>T</variation>
    <location>
        <position position="473"/>
    </location>
</feature>
<protein>
    <recommendedName>
        <fullName evidence="9">Transcription factor SOX-9</fullName>
    </recommendedName>
</protein>
<organism>
    <name type="scientific">Gallus gallus</name>
    <name type="common">Chicken</name>
    <dbReference type="NCBI Taxonomy" id="9031"/>
    <lineage>
        <taxon>Eukaryota</taxon>
        <taxon>Metazoa</taxon>
        <taxon>Chordata</taxon>
        <taxon>Craniata</taxon>
        <taxon>Vertebrata</taxon>
        <taxon>Euteleostomi</taxon>
        <taxon>Archelosauria</taxon>
        <taxon>Archosauria</taxon>
        <taxon>Dinosauria</taxon>
        <taxon>Saurischia</taxon>
        <taxon>Theropoda</taxon>
        <taxon>Coelurosauria</taxon>
        <taxon>Aves</taxon>
        <taxon>Neognathae</taxon>
        <taxon>Galloanserae</taxon>
        <taxon>Galliformes</taxon>
        <taxon>Phasianidae</taxon>
        <taxon>Phasianinae</taxon>
        <taxon>Gallus</taxon>
    </lineage>
</organism>
<proteinExistence type="evidence at protein level"/>
<accession>P48434</accession>
<accession>F1P307</accession>
<accession>O73668</accession>
<reference key="1">
    <citation type="journal article" date="1999" name="Dev. Dyn.">
        <title>Regulation and role of Sox9 in cartilage formation.</title>
        <authorList>
            <person name="Healy C."/>
            <person name="Uwanogho D."/>
            <person name="Sharpe P.T."/>
        </authorList>
    </citation>
    <scope>NUCLEOTIDE SEQUENCE [MRNA]</scope>
    <scope>FUNCTION IN CARTILAGE DEVELOPMENT</scope>
    <scope>DEVELOPMENTAL STAGE</scope>
    <scope>INDUCTION</scope>
</reference>
<reference key="2">
    <citation type="journal article" date="1999" name="Mol. Cell. Biol.">
        <title>Mechanism of regulatory target selection by the SOX high-mobility-group domain proteins as revealed by comparison of SOX1/2/3 and SOX9.</title>
        <authorList>
            <person name="Kamachi Y."/>
            <person name="Cheah K.S."/>
            <person name="Kondoh H."/>
        </authorList>
    </citation>
    <scope>NUCLEOTIDE SEQUENCE [MRNA]</scope>
    <scope>FUNCTION IN TRANSCRIPTION REGULATION</scope>
</reference>
<reference key="3">
    <citation type="journal article" date="2004" name="Nature">
        <title>Sequence and comparative analysis of the chicken genome provide unique perspectives on vertebrate evolution.</title>
        <authorList>
            <person name="Hillier L.W."/>
            <person name="Miller W."/>
            <person name="Birney E."/>
            <person name="Warren W."/>
            <person name="Hardison R.C."/>
            <person name="Ponting C.P."/>
            <person name="Bork P."/>
            <person name="Burt D.W."/>
            <person name="Groenen M.A.M."/>
            <person name="Delany M.E."/>
            <person name="Dodgson J.B."/>
            <person name="Chinwalla A.T."/>
            <person name="Cliften P.F."/>
            <person name="Clifton S.W."/>
            <person name="Delehaunty K.D."/>
            <person name="Fronick C."/>
            <person name="Fulton R.S."/>
            <person name="Graves T.A."/>
            <person name="Kremitzki C."/>
            <person name="Layman D."/>
            <person name="Magrini V."/>
            <person name="McPherson J.D."/>
            <person name="Miner T.L."/>
            <person name="Minx P."/>
            <person name="Nash W.E."/>
            <person name="Nhan M.N."/>
            <person name="Nelson J.O."/>
            <person name="Oddy L.G."/>
            <person name="Pohl C.S."/>
            <person name="Randall-Maher J."/>
            <person name="Smith S.M."/>
            <person name="Wallis J.W."/>
            <person name="Yang S.-P."/>
            <person name="Romanov M.N."/>
            <person name="Rondelli C.M."/>
            <person name="Paton B."/>
            <person name="Smith J."/>
            <person name="Morrice D."/>
            <person name="Daniels L."/>
            <person name="Tempest H.G."/>
            <person name="Robertson L."/>
            <person name="Masabanda J.S."/>
            <person name="Griffin D.K."/>
            <person name="Vignal A."/>
            <person name="Fillon V."/>
            <person name="Jacobbson L."/>
            <person name="Kerje S."/>
            <person name="Andersson L."/>
            <person name="Crooijmans R.P."/>
            <person name="Aerts J."/>
            <person name="van der Poel J.J."/>
            <person name="Ellegren H."/>
            <person name="Caldwell R.B."/>
            <person name="Hubbard S.J."/>
            <person name="Grafham D.V."/>
            <person name="Kierzek A.M."/>
            <person name="McLaren S.R."/>
            <person name="Overton I.M."/>
            <person name="Arakawa H."/>
            <person name="Beattie K.J."/>
            <person name="Bezzubov Y."/>
            <person name="Boardman P.E."/>
            <person name="Bonfield J.K."/>
            <person name="Croning M.D.R."/>
            <person name="Davies R.M."/>
            <person name="Francis M.D."/>
            <person name="Humphray S.J."/>
            <person name="Scott C.E."/>
            <person name="Taylor R.G."/>
            <person name="Tickle C."/>
            <person name="Brown W.R.A."/>
            <person name="Rogers J."/>
            <person name="Buerstedde J.-M."/>
            <person name="Wilson S.A."/>
            <person name="Stubbs L."/>
            <person name="Ovcharenko I."/>
            <person name="Gordon L."/>
            <person name="Lucas S."/>
            <person name="Miller M.M."/>
            <person name="Inoko H."/>
            <person name="Shiina T."/>
            <person name="Kaufman J."/>
            <person name="Salomonsen J."/>
            <person name="Skjoedt K."/>
            <person name="Wong G.K.-S."/>
            <person name="Wang J."/>
            <person name="Liu B."/>
            <person name="Wang J."/>
            <person name="Yu J."/>
            <person name="Yang H."/>
            <person name="Nefedov M."/>
            <person name="Koriabine M."/>
            <person name="Dejong P.J."/>
            <person name="Goodstadt L."/>
            <person name="Webber C."/>
            <person name="Dickens N.J."/>
            <person name="Letunic I."/>
            <person name="Suyama M."/>
            <person name="Torrents D."/>
            <person name="von Mering C."/>
            <person name="Zdobnov E.M."/>
            <person name="Makova K."/>
            <person name="Nekrutenko A."/>
            <person name="Elnitski L."/>
            <person name="Eswara P."/>
            <person name="King D.C."/>
            <person name="Yang S.-P."/>
            <person name="Tyekucheva S."/>
            <person name="Radakrishnan A."/>
            <person name="Harris R.S."/>
            <person name="Chiaromonte F."/>
            <person name="Taylor J."/>
            <person name="He J."/>
            <person name="Rijnkels M."/>
            <person name="Griffiths-Jones S."/>
            <person name="Ureta-Vidal A."/>
            <person name="Hoffman M.M."/>
            <person name="Severin J."/>
            <person name="Searle S.M.J."/>
            <person name="Law A.S."/>
            <person name="Speed D."/>
            <person name="Waddington D."/>
            <person name="Cheng Z."/>
            <person name="Tuzun E."/>
            <person name="Eichler E."/>
            <person name="Bao Z."/>
            <person name="Flicek P."/>
            <person name="Shteynberg D.D."/>
            <person name="Brent M.R."/>
            <person name="Bye J.M."/>
            <person name="Huckle E.J."/>
            <person name="Chatterji S."/>
            <person name="Dewey C."/>
            <person name="Pachter L."/>
            <person name="Kouranov A."/>
            <person name="Mourelatos Z."/>
            <person name="Hatzigeorgiou A.G."/>
            <person name="Paterson A.H."/>
            <person name="Ivarie R."/>
            <person name="Brandstrom M."/>
            <person name="Axelsson E."/>
            <person name="Backstrom N."/>
            <person name="Berlin S."/>
            <person name="Webster M.T."/>
            <person name="Pourquie O."/>
            <person name="Reymond A."/>
            <person name="Ucla C."/>
            <person name="Antonarakis S.E."/>
            <person name="Long M."/>
            <person name="Emerson J.J."/>
            <person name="Betran E."/>
            <person name="Dupanloup I."/>
            <person name="Kaessmann H."/>
            <person name="Hinrichs A.S."/>
            <person name="Bejerano G."/>
            <person name="Furey T.S."/>
            <person name="Harte R.A."/>
            <person name="Raney B."/>
            <person name="Siepel A."/>
            <person name="Kent W.J."/>
            <person name="Haussler D."/>
            <person name="Eyras E."/>
            <person name="Castelo R."/>
            <person name="Abril J.F."/>
            <person name="Castellano S."/>
            <person name="Camara F."/>
            <person name="Parra G."/>
            <person name="Guigo R."/>
            <person name="Bourque G."/>
            <person name="Tesler G."/>
            <person name="Pevzner P.A."/>
            <person name="Smit A."/>
            <person name="Fulton L.A."/>
            <person name="Mardis E.R."/>
            <person name="Wilson R.K."/>
        </authorList>
    </citation>
    <scope>NUCLEOTIDE SEQUENCE [LARGE SCALE GENOMIC DNA]</scope>
    <source>
        <strain>Red jungle fowl</strain>
    </source>
</reference>
<reference key="4">
    <citation type="journal article" date="2013" name="Proc. Natl. Acad. Sci. U.S.A.">
        <title>Phosphorylation of Sox9 is required for neural crest delamination and is regulated downstream of BMP and canonical Wnt signaling.</title>
        <authorList>
            <person name="Liu J.A."/>
            <person name="Wu M.H."/>
            <person name="Yan C.H."/>
            <person name="Chau B.K."/>
            <person name="So H."/>
            <person name="Ng A."/>
            <person name="Chan A."/>
            <person name="Cheah K.S."/>
            <person name="Briscoe J."/>
            <person name="Cheung M."/>
        </authorList>
    </citation>
    <scope>FUNCTION IN NEURAL CREST DELAMINATION</scope>
    <scope>INTERACTION WITH SNAI2 AND UBE2I</scope>
    <scope>SUBCELLULAR LOCATION</scope>
    <scope>SUMOYLATION AT LYS-376</scope>
    <scope>PHOSPHORYLATION AT SER-64 AND SER-181</scope>
    <scope>MUTAGENESIS OF LYS-61; SER-64; SER-181; LYS-254 AND LYS-376</scope>
</reference>
<keyword id="KW-0010">Activator</keyword>
<keyword id="KW-0221">Differentiation</keyword>
<keyword id="KW-0238">DNA-binding</keyword>
<keyword id="KW-1017">Isopeptide bond</keyword>
<keyword id="KW-0539">Nucleus</keyword>
<keyword id="KW-0597">Phosphoprotein</keyword>
<keyword id="KW-1185">Reference proteome</keyword>
<keyword id="KW-0804">Transcription</keyword>
<keyword id="KW-0805">Transcription regulation</keyword>
<keyword id="KW-0832">Ubl conjugation</keyword>
<evidence type="ECO:0000250" key="1">
    <source>
        <dbReference type="UniProtKB" id="P48436"/>
    </source>
</evidence>
<evidence type="ECO:0000250" key="2">
    <source>
        <dbReference type="UniProtKB" id="Q04887"/>
    </source>
</evidence>
<evidence type="ECO:0000255" key="3">
    <source>
        <dbReference type="PROSITE-ProRule" id="PRU00267"/>
    </source>
</evidence>
<evidence type="ECO:0000256" key="4">
    <source>
        <dbReference type="SAM" id="MobiDB-lite"/>
    </source>
</evidence>
<evidence type="ECO:0000269" key="5">
    <source>
    </source>
</evidence>
<evidence type="ECO:0000269" key="6">
    <source>
    </source>
</evidence>
<evidence type="ECO:0000269" key="7">
    <source>
    </source>
</evidence>
<evidence type="ECO:0000303" key="8">
    <source>
    </source>
</evidence>
<evidence type="ECO:0000305" key="9"/>
<comment type="function">
    <text evidence="2 5 6 7">Transcription factor that plays a key role in chondrocytes differentiation and skeletal development (PubMed:10340758, PubMed:9858536). Specifically binds the 5'-ACAAAG-3' DNA motif present in enhancers and super-enhancers and promotes expression of genes important for chondrogenesis, including COL2A1 (PubMed:10340758, PubMed:9858536). Plays a central role in successive steps of chondrocyte differentiation. Absolutely required for precartilaginous condensation, the first step in chondrogenesis during which skeletal progenitors differentiate into prechondrocytes (By similarity). Together with SOX5 and SOX6, required for overt chondrogenesis when condensed prechondrocytes differentiate into early stage chondrocytes, the second step in chondrogenesis (By similarity). Later, required to direct hypertrophic maturation and block osteoblast differentiation of growth plate chondrocytes: maintains chondrocyte columnar proliferation, delays prehypertrophy and then prevents osteoblastic differentiation of chondrocytes (By similarity). Also required for chondrocyte hypertrophy, both indirectly, by keeping the lineage fate of chondrocytes, and directly, by remaining present in upper hypertrophic cells (By similarity). Low lipid levels are the main nutritional determinant for chondrogenic commitment of skeletal progenitor cells: when lipids levels are low, FOXO transcription factors promote expression of SOX9, which induces chondrogenic commitment and suppresses fatty acid oxidation (By similarity). In addition to cartilage development, also acts as a regulator of proliferation and differentiation in epithelial stem/progenitor cells (By similarity). In response to bone morphogenetic protein stimulus, phosphorylation is induced and then sumoylation, allowing cooperation with SNAI2 to trigger neural crest delamination (PubMed:23382206).</text>
</comment>
<comment type="subunit">
    <text evidence="6">Interacts with SNAI2; triggers neural crest delamination in a phosphorylation dependent manner. Interacts with UBE2I.</text>
</comment>
<comment type="subcellular location">
    <subcellularLocation>
        <location evidence="3 6">Nucleus</location>
    </subcellularLocation>
</comment>
<comment type="developmental stage">
    <text evidence="5">Found in chondrogenic regions in the branchial arches, somites and limb buds at 22 dpc. At 28 dpc detected in the limbs, developing scapula, prevertebrae and ribs. Found in condensing mesenchyme of the forelimb at 25 dpc. Expressed in the condensing mesenchyme at the distal tips of the developing hindlimbs at 26 dpc.</text>
</comment>
<comment type="induction">
    <text evidence="5">By BMP2 during chondrogenesis.</text>
</comment>
<comment type="domain">
    <text evidence="1">The 9aaTAD motif is a transactivation domain present in a large number of yeast and animal transcription factors.</text>
</comment>
<comment type="PTM">
    <text evidence="6">Phosphorylated at Ser-181 in the developing neural tube. Phosphorylation at either Ser-64 or Ser-181 is required for sumoylation, but phosphorylation is not dependent on sumoylation. Sumoylation is enhanced by PKA. Phosphorylation is required for interaction with SNAI2 to trigger neural crest delamination and for an efficient trunk neural crest delamination, whereas sumoylation plays a less significant role. Phosphorylation and sumoylation are induced by BMP signaling pathway.</text>
</comment>
<comment type="PTM">
    <text evidence="6">Sumoylated at Lys-376; phosphorylation at either Ser-64 or Ser-181 is required for sumoylation. Sumoylation is induced by BMP signaling pathway.</text>
</comment>
<comment type="sequence caution" evidence="9">
    <conflict type="frameshift">
        <sequence resource="EMBL-CDS" id="AAB09663"/>
    </conflict>
</comment>
<name>SOX9_CHICK</name>